<keyword id="KW-0963">Cytoplasm</keyword>
<keyword id="KW-0251">Elongation factor</keyword>
<keyword id="KW-0648">Protein biosynthesis</keyword>
<accession>A4XM01</accession>
<reference key="1">
    <citation type="submission" date="2007-04" db="EMBL/GenBank/DDBJ databases">
        <title>Genome sequence of the thermophilic hydrogen-producing bacterium Caldicellulosiruptor saccharolyticus DSM 8903.</title>
        <authorList>
            <person name="Copeland A."/>
            <person name="Lucas S."/>
            <person name="Lapidus A."/>
            <person name="Barry K."/>
            <person name="Detter J.C."/>
            <person name="Glavina del Rio T."/>
            <person name="Hammon N."/>
            <person name="Israni S."/>
            <person name="Dalin E."/>
            <person name="Tice H."/>
            <person name="Pitluck S."/>
            <person name="Kiss H."/>
            <person name="Brettin T."/>
            <person name="Bruce D."/>
            <person name="Han C."/>
            <person name="Schmutz J."/>
            <person name="Larimer F."/>
            <person name="Land M."/>
            <person name="Hauser L."/>
            <person name="Kyrpides N."/>
            <person name="Lykidis A."/>
            <person name="van de Werken H.J.G."/>
            <person name="Verhaart M.R.A."/>
            <person name="VanFossen A.L."/>
            <person name="Lewis D.L."/>
            <person name="Nichols J.D."/>
            <person name="Goorissen H.P."/>
            <person name="van Niel E.W.J."/>
            <person name="Stams F.J.M."/>
            <person name="Willquist K.U."/>
            <person name="Ward D.E."/>
            <person name="van der Oost J."/>
            <person name="Kelly R.M."/>
            <person name="Kengen S.M.W."/>
            <person name="Richardson P."/>
        </authorList>
    </citation>
    <scope>NUCLEOTIDE SEQUENCE [LARGE SCALE GENOMIC DNA]</scope>
    <source>
        <strain>ATCC 43494 / DSM 8903 / Tp8T 6331</strain>
    </source>
</reference>
<protein>
    <recommendedName>
        <fullName evidence="1">Elongation factor Ts</fullName>
        <shortName evidence="1">EF-Ts</shortName>
    </recommendedName>
</protein>
<sequence length="204" mass="23134">MISAEMVKELRERTGAGMMDCKKALEDANGDMEKAIELLRERGLAKAAKRASRVAAEGIVESYIHGNGRIGVLVEINCETDFVARNEEFRQFAKDIAMQIAAANPKYVSREEIPQEVIEREKAILRQQALNEGKPENVVDRIIEGRLEKFFEEVCLLEQPWIKNPDMKIKDLLTEKIAKIGENIVIRRFARFERGEGIEKAASC</sequence>
<dbReference type="EMBL" id="CP000679">
    <property type="protein sequence ID" value="ABP67936.1"/>
    <property type="molecule type" value="Genomic_DNA"/>
</dbReference>
<dbReference type="RefSeq" id="WP_011917862.1">
    <property type="nucleotide sequence ID" value="NC_009437.1"/>
</dbReference>
<dbReference type="SMR" id="A4XM01"/>
<dbReference type="STRING" id="351627.Csac_2358"/>
<dbReference type="KEGG" id="csc:Csac_2358"/>
<dbReference type="eggNOG" id="COG0264">
    <property type="taxonomic scope" value="Bacteria"/>
</dbReference>
<dbReference type="HOGENOM" id="CLU_047155_1_1_9"/>
<dbReference type="OrthoDB" id="9808348at2"/>
<dbReference type="Proteomes" id="UP000000256">
    <property type="component" value="Chromosome"/>
</dbReference>
<dbReference type="GO" id="GO:0005737">
    <property type="term" value="C:cytoplasm"/>
    <property type="evidence" value="ECO:0007669"/>
    <property type="project" value="UniProtKB-SubCell"/>
</dbReference>
<dbReference type="GO" id="GO:0003746">
    <property type="term" value="F:translation elongation factor activity"/>
    <property type="evidence" value="ECO:0007669"/>
    <property type="project" value="UniProtKB-UniRule"/>
</dbReference>
<dbReference type="CDD" id="cd14275">
    <property type="entry name" value="UBA_EF-Ts"/>
    <property type="match status" value="1"/>
</dbReference>
<dbReference type="FunFam" id="1.10.286.20:FF:000001">
    <property type="entry name" value="Elongation factor Ts"/>
    <property type="match status" value="1"/>
</dbReference>
<dbReference type="FunFam" id="1.10.8.10:FF:000001">
    <property type="entry name" value="Elongation factor Ts"/>
    <property type="match status" value="1"/>
</dbReference>
<dbReference type="Gene3D" id="1.10.286.20">
    <property type="match status" value="1"/>
</dbReference>
<dbReference type="Gene3D" id="1.10.8.10">
    <property type="entry name" value="DNA helicase RuvA subunit, C-terminal domain"/>
    <property type="match status" value="1"/>
</dbReference>
<dbReference type="Gene3D" id="3.30.479.20">
    <property type="entry name" value="Elongation factor Ts, dimerisation domain"/>
    <property type="match status" value="1"/>
</dbReference>
<dbReference type="HAMAP" id="MF_00050">
    <property type="entry name" value="EF_Ts"/>
    <property type="match status" value="1"/>
</dbReference>
<dbReference type="InterPro" id="IPR036402">
    <property type="entry name" value="EF-Ts_dimer_sf"/>
</dbReference>
<dbReference type="InterPro" id="IPR001816">
    <property type="entry name" value="Transl_elong_EFTs/EF1B"/>
</dbReference>
<dbReference type="InterPro" id="IPR014039">
    <property type="entry name" value="Transl_elong_EFTs/EF1B_dimer"/>
</dbReference>
<dbReference type="InterPro" id="IPR018101">
    <property type="entry name" value="Transl_elong_Ts_CS"/>
</dbReference>
<dbReference type="InterPro" id="IPR009060">
    <property type="entry name" value="UBA-like_sf"/>
</dbReference>
<dbReference type="NCBIfam" id="TIGR00116">
    <property type="entry name" value="tsf"/>
    <property type="match status" value="2"/>
</dbReference>
<dbReference type="PANTHER" id="PTHR11741">
    <property type="entry name" value="ELONGATION FACTOR TS"/>
    <property type="match status" value="1"/>
</dbReference>
<dbReference type="PANTHER" id="PTHR11741:SF0">
    <property type="entry name" value="ELONGATION FACTOR TS, MITOCHONDRIAL"/>
    <property type="match status" value="1"/>
</dbReference>
<dbReference type="Pfam" id="PF00889">
    <property type="entry name" value="EF_TS"/>
    <property type="match status" value="1"/>
</dbReference>
<dbReference type="SUPFAM" id="SSF54713">
    <property type="entry name" value="Elongation factor Ts (EF-Ts), dimerisation domain"/>
    <property type="match status" value="1"/>
</dbReference>
<dbReference type="SUPFAM" id="SSF46934">
    <property type="entry name" value="UBA-like"/>
    <property type="match status" value="1"/>
</dbReference>
<dbReference type="PROSITE" id="PS01126">
    <property type="entry name" value="EF_TS_1"/>
    <property type="match status" value="1"/>
</dbReference>
<dbReference type="PROSITE" id="PS01127">
    <property type="entry name" value="EF_TS_2"/>
    <property type="match status" value="1"/>
</dbReference>
<name>EFTS_CALS8</name>
<gene>
    <name evidence="1" type="primary">tsf</name>
    <name type="ordered locus">Csac_2358</name>
</gene>
<organism>
    <name type="scientific">Caldicellulosiruptor saccharolyticus (strain ATCC 43494 / DSM 8903 / Tp8T 6331)</name>
    <dbReference type="NCBI Taxonomy" id="351627"/>
    <lineage>
        <taxon>Bacteria</taxon>
        <taxon>Bacillati</taxon>
        <taxon>Bacillota</taxon>
        <taxon>Bacillota incertae sedis</taxon>
        <taxon>Caldicellulosiruptorales</taxon>
        <taxon>Caldicellulosiruptoraceae</taxon>
        <taxon>Caldicellulosiruptor</taxon>
    </lineage>
</organism>
<proteinExistence type="inferred from homology"/>
<evidence type="ECO:0000255" key="1">
    <source>
        <dbReference type="HAMAP-Rule" id="MF_00050"/>
    </source>
</evidence>
<comment type="function">
    <text evidence="1">Associates with the EF-Tu.GDP complex and induces the exchange of GDP to GTP. It remains bound to the aminoacyl-tRNA.EF-Tu.GTP complex up to the GTP hydrolysis stage on the ribosome.</text>
</comment>
<comment type="subcellular location">
    <subcellularLocation>
        <location evidence="1">Cytoplasm</location>
    </subcellularLocation>
</comment>
<comment type="similarity">
    <text evidence="1">Belongs to the EF-Ts family.</text>
</comment>
<feature type="chain" id="PRO_1000006070" description="Elongation factor Ts">
    <location>
        <begin position="1"/>
        <end position="204"/>
    </location>
</feature>
<feature type="region of interest" description="Involved in Mg(2+) ion dislocation from EF-Tu" evidence="1">
    <location>
        <begin position="80"/>
        <end position="83"/>
    </location>
</feature>